<evidence type="ECO:0000250" key="1"/>
<evidence type="ECO:0000255" key="2">
    <source>
        <dbReference type="HAMAP-Rule" id="MF_00403"/>
    </source>
</evidence>
<evidence type="ECO:0000305" key="3"/>
<accession>B7MCV7</accession>
<sequence>MATVNQLVRKPRARKVAKSNVPALEACPQKRGVCTRVYTTTPKKPNSALRKVCRVRLTNGFEVTSYIGGEGHNLQEHSVILIRGGRVKDLPGVRYHTVRGALDCSGVKDRKQARSKYGVKRPKA</sequence>
<reference key="1">
    <citation type="journal article" date="2009" name="PLoS Genet.">
        <title>Organised genome dynamics in the Escherichia coli species results in highly diverse adaptive paths.</title>
        <authorList>
            <person name="Touchon M."/>
            <person name="Hoede C."/>
            <person name="Tenaillon O."/>
            <person name="Barbe V."/>
            <person name="Baeriswyl S."/>
            <person name="Bidet P."/>
            <person name="Bingen E."/>
            <person name="Bonacorsi S."/>
            <person name="Bouchier C."/>
            <person name="Bouvet O."/>
            <person name="Calteau A."/>
            <person name="Chiapello H."/>
            <person name="Clermont O."/>
            <person name="Cruveiller S."/>
            <person name="Danchin A."/>
            <person name="Diard M."/>
            <person name="Dossat C."/>
            <person name="Karoui M.E."/>
            <person name="Frapy E."/>
            <person name="Garry L."/>
            <person name="Ghigo J.M."/>
            <person name="Gilles A.M."/>
            <person name="Johnson J."/>
            <person name="Le Bouguenec C."/>
            <person name="Lescat M."/>
            <person name="Mangenot S."/>
            <person name="Martinez-Jehanne V."/>
            <person name="Matic I."/>
            <person name="Nassif X."/>
            <person name="Oztas S."/>
            <person name="Petit M.A."/>
            <person name="Pichon C."/>
            <person name="Rouy Z."/>
            <person name="Ruf C.S."/>
            <person name="Schneider D."/>
            <person name="Tourret J."/>
            <person name="Vacherie B."/>
            <person name="Vallenet D."/>
            <person name="Medigue C."/>
            <person name="Rocha E.P.C."/>
            <person name="Denamur E."/>
        </authorList>
    </citation>
    <scope>NUCLEOTIDE SEQUENCE [LARGE SCALE GENOMIC DNA]</scope>
    <source>
        <strain>S88 / ExPEC</strain>
    </source>
</reference>
<gene>
    <name evidence="2" type="primary">rpsL</name>
    <name type="ordered locus">ECS88_3730</name>
</gene>
<name>RS12_ECO45</name>
<proteinExistence type="inferred from homology"/>
<dbReference type="EMBL" id="CU928161">
    <property type="protein sequence ID" value="CAR04946.1"/>
    <property type="molecule type" value="Genomic_DNA"/>
</dbReference>
<dbReference type="RefSeq" id="WP_000246815.1">
    <property type="nucleotide sequence ID" value="NC_011742.1"/>
</dbReference>
<dbReference type="EMDB" id="EMD-7014"/>
<dbReference type="EMDB" id="EMD-7015"/>
<dbReference type="EMDB" id="EMD-7016"/>
<dbReference type="EMDB" id="EMD-7970"/>
<dbReference type="EMDB" id="EMD-8621"/>
<dbReference type="EMDB" id="EMD-8826"/>
<dbReference type="EMDB" id="EMD-8829"/>
<dbReference type="SMR" id="B7MCV7"/>
<dbReference type="IntAct" id="B7MCV7">
    <property type="interactions" value="1"/>
</dbReference>
<dbReference type="GeneID" id="98390450"/>
<dbReference type="KEGG" id="ecz:ECS88_3730"/>
<dbReference type="HOGENOM" id="CLU_104295_1_2_6"/>
<dbReference type="Proteomes" id="UP000000747">
    <property type="component" value="Chromosome"/>
</dbReference>
<dbReference type="GO" id="GO:0015935">
    <property type="term" value="C:small ribosomal subunit"/>
    <property type="evidence" value="ECO:0007669"/>
    <property type="project" value="InterPro"/>
</dbReference>
<dbReference type="GO" id="GO:0019843">
    <property type="term" value="F:rRNA binding"/>
    <property type="evidence" value="ECO:0007669"/>
    <property type="project" value="UniProtKB-UniRule"/>
</dbReference>
<dbReference type="GO" id="GO:0003735">
    <property type="term" value="F:structural constituent of ribosome"/>
    <property type="evidence" value="ECO:0007669"/>
    <property type="project" value="InterPro"/>
</dbReference>
<dbReference type="GO" id="GO:0000049">
    <property type="term" value="F:tRNA binding"/>
    <property type="evidence" value="ECO:0007669"/>
    <property type="project" value="UniProtKB-UniRule"/>
</dbReference>
<dbReference type="GO" id="GO:0006412">
    <property type="term" value="P:translation"/>
    <property type="evidence" value="ECO:0007669"/>
    <property type="project" value="UniProtKB-UniRule"/>
</dbReference>
<dbReference type="CDD" id="cd03368">
    <property type="entry name" value="Ribosomal_S12"/>
    <property type="match status" value="1"/>
</dbReference>
<dbReference type="FunFam" id="2.40.50.140:FF:000001">
    <property type="entry name" value="30S ribosomal protein S12"/>
    <property type="match status" value="1"/>
</dbReference>
<dbReference type="Gene3D" id="2.40.50.140">
    <property type="entry name" value="Nucleic acid-binding proteins"/>
    <property type="match status" value="1"/>
</dbReference>
<dbReference type="HAMAP" id="MF_00403_B">
    <property type="entry name" value="Ribosomal_uS12_B"/>
    <property type="match status" value="1"/>
</dbReference>
<dbReference type="InterPro" id="IPR012340">
    <property type="entry name" value="NA-bd_OB-fold"/>
</dbReference>
<dbReference type="InterPro" id="IPR006032">
    <property type="entry name" value="Ribosomal_uS12"/>
</dbReference>
<dbReference type="InterPro" id="IPR005679">
    <property type="entry name" value="Ribosomal_uS12_bac"/>
</dbReference>
<dbReference type="NCBIfam" id="TIGR00981">
    <property type="entry name" value="rpsL_bact"/>
    <property type="match status" value="1"/>
</dbReference>
<dbReference type="PANTHER" id="PTHR11652">
    <property type="entry name" value="30S RIBOSOMAL PROTEIN S12 FAMILY MEMBER"/>
    <property type="match status" value="1"/>
</dbReference>
<dbReference type="Pfam" id="PF00164">
    <property type="entry name" value="Ribosom_S12_S23"/>
    <property type="match status" value="1"/>
</dbReference>
<dbReference type="PIRSF" id="PIRSF002133">
    <property type="entry name" value="Ribosomal_S12/S23"/>
    <property type="match status" value="1"/>
</dbReference>
<dbReference type="PRINTS" id="PR01034">
    <property type="entry name" value="RIBOSOMALS12"/>
</dbReference>
<dbReference type="SUPFAM" id="SSF50249">
    <property type="entry name" value="Nucleic acid-binding proteins"/>
    <property type="match status" value="1"/>
</dbReference>
<dbReference type="PROSITE" id="PS00055">
    <property type="entry name" value="RIBOSOMAL_S12"/>
    <property type="match status" value="1"/>
</dbReference>
<keyword id="KW-0007">Acetylation</keyword>
<keyword id="KW-0488">Methylation</keyword>
<keyword id="KW-1185">Reference proteome</keyword>
<keyword id="KW-0687">Ribonucleoprotein</keyword>
<keyword id="KW-0689">Ribosomal protein</keyword>
<keyword id="KW-0694">RNA-binding</keyword>
<keyword id="KW-0699">rRNA-binding</keyword>
<keyword id="KW-0820">tRNA-binding</keyword>
<protein>
    <recommendedName>
        <fullName evidence="2">Small ribosomal subunit protein uS12</fullName>
    </recommendedName>
    <alternativeName>
        <fullName evidence="3">30S ribosomal protein S12</fullName>
    </alternativeName>
</protein>
<organism>
    <name type="scientific">Escherichia coli O45:K1 (strain S88 / ExPEC)</name>
    <dbReference type="NCBI Taxonomy" id="585035"/>
    <lineage>
        <taxon>Bacteria</taxon>
        <taxon>Pseudomonadati</taxon>
        <taxon>Pseudomonadota</taxon>
        <taxon>Gammaproteobacteria</taxon>
        <taxon>Enterobacterales</taxon>
        <taxon>Enterobacteriaceae</taxon>
        <taxon>Escherichia</taxon>
    </lineage>
</organism>
<comment type="function">
    <text evidence="2">With S4 and S5 plays an important role in translational accuracy.</text>
</comment>
<comment type="function">
    <text evidence="2">Interacts with and stabilizes bases of the 16S rRNA that are involved in tRNA selection in the A site and with the mRNA backbone. Located at the interface of the 30S and 50S subunits, it traverses the body of the 30S subunit contacting proteins on the other side and probably holding the rRNA structure together. The combined cluster of proteins S8, S12 and S17 appears to hold together the shoulder and platform of the 30S subunit.</text>
</comment>
<comment type="subunit">
    <text evidence="2">Part of the 30S ribosomal subunit. Contacts proteins S8 and S17. May interact with IF1 in the 30S initiation complex.</text>
</comment>
<comment type="similarity">
    <text evidence="2">Belongs to the universal ribosomal protein uS12 family.</text>
</comment>
<feature type="chain" id="PRO_1000194165" description="Small ribosomal subunit protein uS12">
    <location>
        <begin position="1"/>
        <end position="124"/>
    </location>
</feature>
<feature type="modified residue" description="3-methylthioaspartic acid" evidence="1">
    <location>
        <position position="89"/>
    </location>
</feature>
<feature type="modified residue" description="N6-acetyllysine" evidence="2">
    <location>
        <position position="108"/>
    </location>
</feature>